<comment type="function">
    <text evidence="1">Involved in the synthesis of autoinducer 2 (AI-2) which is secreted by bacteria and is used to communicate both the cell density and the metabolic potential of the environment. The regulation of gene expression in response to changes in cell density is called quorum sensing. Catalyzes the transformation of S-ribosylhomocysteine (RHC) to homocysteine (HC) and 4,5-dihydroxy-2,3-pentadione (DPD).</text>
</comment>
<comment type="catalytic activity">
    <reaction evidence="1">
        <text>S-(5-deoxy-D-ribos-5-yl)-L-homocysteine = (S)-4,5-dihydroxypentane-2,3-dione + L-homocysteine</text>
        <dbReference type="Rhea" id="RHEA:17753"/>
        <dbReference type="ChEBI" id="CHEBI:29484"/>
        <dbReference type="ChEBI" id="CHEBI:58195"/>
        <dbReference type="ChEBI" id="CHEBI:58199"/>
        <dbReference type="EC" id="4.4.1.21"/>
    </reaction>
</comment>
<comment type="cofactor">
    <cofactor evidence="1">
        <name>Fe cation</name>
        <dbReference type="ChEBI" id="CHEBI:24875"/>
    </cofactor>
    <text evidence="1">Binds 1 Fe cation per subunit.</text>
</comment>
<comment type="subunit">
    <text evidence="1">Homodimer.</text>
</comment>
<comment type="similarity">
    <text evidence="1">Belongs to the LuxS family.</text>
</comment>
<comment type="sequence caution" evidence="2">
    <conflict type="erroneous initiation">
        <sequence resource="EMBL-CDS" id="ABF36423"/>
    </conflict>
</comment>
<name>LUXS_STRPB</name>
<keyword id="KW-0071">Autoinducer synthesis</keyword>
<keyword id="KW-0408">Iron</keyword>
<keyword id="KW-0456">Lyase</keyword>
<keyword id="KW-0479">Metal-binding</keyword>
<keyword id="KW-0673">Quorum sensing</keyword>
<sequence>MTKEVIVESFELDHTIVKAPYVRLISEEFGPKGDRITNFDVRLVQPNQNSIETAGLHTIEHLLAKLIRQRIDGMIDCSPFGCRTGFHLIMWGKHSSTDIAKVIKSSLEEIATGITWEDVPGTTLESCGNYKDHSLFAAKEWAQLIIDQGISDDPFSRHVI</sequence>
<proteinExistence type="inferred from homology"/>
<feature type="chain" id="PRO_0000298042" description="S-ribosylhomocysteine lyase">
    <location>
        <begin position="1"/>
        <end position="160"/>
    </location>
</feature>
<feature type="binding site" evidence="1">
    <location>
        <position position="57"/>
    </location>
    <ligand>
        <name>Fe cation</name>
        <dbReference type="ChEBI" id="CHEBI:24875"/>
    </ligand>
</feature>
<feature type="binding site" evidence="1">
    <location>
        <position position="61"/>
    </location>
    <ligand>
        <name>Fe cation</name>
        <dbReference type="ChEBI" id="CHEBI:24875"/>
    </ligand>
</feature>
<feature type="binding site" evidence="1">
    <location>
        <position position="127"/>
    </location>
    <ligand>
        <name>Fe cation</name>
        <dbReference type="ChEBI" id="CHEBI:24875"/>
    </ligand>
</feature>
<reference key="1">
    <citation type="journal article" date="2006" name="Proc. Natl. Acad. Sci. U.S.A.">
        <title>Molecular genetic anatomy of inter- and intraserotype variation in the human bacterial pathogen group A Streptococcus.</title>
        <authorList>
            <person name="Beres S.B."/>
            <person name="Richter E.W."/>
            <person name="Nagiec M.J."/>
            <person name="Sumby P."/>
            <person name="Porcella S.F."/>
            <person name="DeLeo F.R."/>
            <person name="Musser J.M."/>
        </authorList>
    </citation>
    <scope>NUCLEOTIDE SEQUENCE [LARGE SCALE GENOMIC DNA]</scope>
    <source>
        <strain>MGAS2096</strain>
    </source>
</reference>
<evidence type="ECO:0000255" key="1">
    <source>
        <dbReference type="HAMAP-Rule" id="MF_00091"/>
    </source>
</evidence>
<evidence type="ECO:0000305" key="2"/>
<protein>
    <recommendedName>
        <fullName evidence="1">S-ribosylhomocysteine lyase</fullName>
        <ecNumber evidence="1">4.4.1.21</ecNumber>
    </recommendedName>
    <alternativeName>
        <fullName evidence="1">AI-2 synthesis protein</fullName>
    </alternativeName>
    <alternativeName>
        <fullName evidence="1">Autoinducer-2 production protein LuxS</fullName>
    </alternativeName>
</protein>
<organism>
    <name type="scientific">Streptococcus pyogenes serotype M12 (strain MGAS2096)</name>
    <dbReference type="NCBI Taxonomy" id="370553"/>
    <lineage>
        <taxon>Bacteria</taxon>
        <taxon>Bacillati</taxon>
        <taxon>Bacillota</taxon>
        <taxon>Bacilli</taxon>
        <taxon>Lactobacillales</taxon>
        <taxon>Streptococcaceae</taxon>
        <taxon>Streptococcus</taxon>
    </lineage>
</organism>
<gene>
    <name evidence="1" type="primary">luxS</name>
    <name type="ordered locus">MGAS2096_Spy1371</name>
</gene>
<dbReference type="EC" id="4.4.1.21" evidence="1"/>
<dbReference type="EMBL" id="CP000261">
    <property type="protein sequence ID" value="ABF36423.1"/>
    <property type="status" value="ALT_INIT"/>
    <property type="molecule type" value="Genomic_DNA"/>
</dbReference>
<dbReference type="SMR" id="Q1JAI5"/>
<dbReference type="KEGG" id="spj:MGAS2096_Spy1371"/>
<dbReference type="HOGENOM" id="CLU_107531_2_1_9"/>
<dbReference type="GO" id="GO:0005506">
    <property type="term" value="F:iron ion binding"/>
    <property type="evidence" value="ECO:0007669"/>
    <property type="project" value="InterPro"/>
</dbReference>
<dbReference type="GO" id="GO:0043768">
    <property type="term" value="F:S-ribosylhomocysteine lyase activity"/>
    <property type="evidence" value="ECO:0007669"/>
    <property type="project" value="UniProtKB-UniRule"/>
</dbReference>
<dbReference type="GO" id="GO:0009372">
    <property type="term" value="P:quorum sensing"/>
    <property type="evidence" value="ECO:0007669"/>
    <property type="project" value="UniProtKB-UniRule"/>
</dbReference>
<dbReference type="Gene3D" id="3.30.1360.80">
    <property type="entry name" value="S-ribosylhomocysteinase (LuxS)"/>
    <property type="match status" value="1"/>
</dbReference>
<dbReference type="HAMAP" id="MF_00091">
    <property type="entry name" value="LuxS"/>
    <property type="match status" value="1"/>
</dbReference>
<dbReference type="InterPro" id="IPR037005">
    <property type="entry name" value="LuxS_sf"/>
</dbReference>
<dbReference type="InterPro" id="IPR011249">
    <property type="entry name" value="Metalloenz_LuxS/M16"/>
</dbReference>
<dbReference type="InterPro" id="IPR003815">
    <property type="entry name" value="S-ribosylhomocysteinase"/>
</dbReference>
<dbReference type="NCBIfam" id="NF002607">
    <property type="entry name" value="PRK02260.2-5"/>
    <property type="match status" value="1"/>
</dbReference>
<dbReference type="NCBIfam" id="NF002608">
    <property type="entry name" value="PRK02260.3-1"/>
    <property type="match status" value="1"/>
</dbReference>
<dbReference type="PANTHER" id="PTHR35799">
    <property type="entry name" value="S-RIBOSYLHOMOCYSTEINE LYASE"/>
    <property type="match status" value="1"/>
</dbReference>
<dbReference type="PANTHER" id="PTHR35799:SF1">
    <property type="entry name" value="S-RIBOSYLHOMOCYSTEINE LYASE"/>
    <property type="match status" value="1"/>
</dbReference>
<dbReference type="Pfam" id="PF02664">
    <property type="entry name" value="LuxS"/>
    <property type="match status" value="1"/>
</dbReference>
<dbReference type="PIRSF" id="PIRSF006160">
    <property type="entry name" value="AI2"/>
    <property type="match status" value="1"/>
</dbReference>
<dbReference type="PRINTS" id="PR01487">
    <property type="entry name" value="LUXSPROTEIN"/>
</dbReference>
<dbReference type="SUPFAM" id="SSF63411">
    <property type="entry name" value="LuxS/MPP-like metallohydrolase"/>
    <property type="match status" value="1"/>
</dbReference>
<accession>Q1JAI5</accession>